<protein>
    <recommendedName>
        <fullName evidence="1">33 kDa chaperonin</fullName>
    </recommendedName>
    <alternativeName>
        <fullName evidence="1">Heat shock protein 33 homolog</fullName>
        <shortName evidence="1">HSP33</shortName>
    </alternativeName>
</protein>
<gene>
    <name evidence="1" type="primary">hslO</name>
    <name type="ordered locus">Swoo_4737</name>
</gene>
<feature type="chain" id="PRO_1000095030" description="33 kDa chaperonin">
    <location>
        <begin position="1"/>
        <end position="286"/>
    </location>
</feature>
<feature type="disulfide bond" description="Redox-active" evidence="1">
    <location>
        <begin position="225"/>
        <end position="227"/>
    </location>
</feature>
<feature type="disulfide bond" description="Redox-active" evidence="1">
    <location>
        <begin position="258"/>
        <end position="261"/>
    </location>
</feature>
<comment type="function">
    <text evidence="1">Redox regulated molecular chaperone. Protects both thermally unfolding and oxidatively damaged proteins from irreversible aggregation. Plays an important role in the bacterial defense system toward oxidative stress.</text>
</comment>
<comment type="subcellular location">
    <subcellularLocation>
        <location evidence="1">Cytoplasm</location>
    </subcellularLocation>
</comment>
<comment type="PTM">
    <text evidence="1">Under oxidizing conditions two disulfide bonds are formed involving the reactive cysteines. Under reducing conditions zinc is bound to the reactive cysteines and the protein is inactive.</text>
</comment>
<comment type="similarity">
    <text evidence="1">Belongs to the HSP33 family.</text>
</comment>
<reference key="1">
    <citation type="submission" date="2008-02" db="EMBL/GenBank/DDBJ databases">
        <title>Complete sequence of Shewanella woodyi ATCC 51908.</title>
        <authorList>
            <consortium name="US DOE Joint Genome Institute"/>
            <person name="Copeland A."/>
            <person name="Lucas S."/>
            <person name="Lapidus A."/>
            <person name="Glavina del Rio T."/>
            <person name="Dalin E."/>
            <person name="Tice H."/>
            <person name="Bruce D."/>
            <person name="Goodwin L."/>
            <person name="Pitluck S."/>
            <person name="Sims D."/>
            <person name="Brettin T."/>
            <person name="Detter J.C."/>
            <person name="Han C."/>
            <person name="Kuske C.R."/>
            <person name="Schmutz J."/>
            <person name="Larimer F."/>
            <person name="Land M."/>
            <person name="Hauser L."/>
            <person name="Kyrpides N."/>
            <person name="Lykidis A."/>
            <person name="Zhao J.-S."/>
            <person name="Richardson P."/>
        </authorList>
    </citation>
    <scope>NUCLEOTIDE SEQUENCE [LARGE SCALE GENOMIC DNA]</scope>
    <source>
        <strain>ATCC 51908 / MS32</strain>
    </source>
</reference>
<keyword id="KW-0143">Chaperone</keyword>
<keyword id="KW-0963">Cytoplasm</keyword>
<keyword id="KW-1015">Disulfide bond</keyword>
<keyword id="KW-0676">Redox-active center</keyword>
<keyword id="KW-1185">Reference proteome</keyword>
<keyword id="KW-0862">Zinc</keyword>
<organism>
    <name type="scientific">Shewanella woodyi (strain ATCC 51908 / MS32)</name>
    <dbReference type="NCBI Taxonomy" id="392500"/>
    <lineage>
        <taxon>Bacteria</taxon>
        <taxon>Pseudomonadati</taxon>
        <taxon>Pseudomonadota</taxon>
        <taxon>Gammaproteobacteria</taxon>
        <taxon>Alteromonadales</taxon>
        <taxon>Shewanellaceae</taxon>
        <taxon>Shewanella</taxon>
    </lineage>
</organism>
<name>HSLO_SHEWM</name>
<evidence type="ECO:0000255" key="1">
    <source>
        <dbReference type="HAMAP-Rule" id="MF_00117"/>
    </source>
</evidence>
<dbReference type="EMBL" id="CP000961">
    <property type="protein sequence ID" value="ACA88987.1"/>
    <property type="molecule type" value="Genomic_DNA"/>
</dbReference>
<dbReference type="RefSeq" id="WP_012327304.1">
    <property type="nucleotide sequence ID" value="NC_010506.1"/>
</dbReference>
<dbReference type="SMR" id="B1KN30"/>
<dbReference type="STRING" id="392500.Swoo_4737"/>
<dbReference type="KEGG" id="swd:Swoo_4737"/>
<dbReference type="eggNOG" id="COG1281">
    <property type="taxonomic scope" value="Bacteria"/>
</dbReference>
<dbReference type="HOGENOM" id="CLU_054493_0_0_6"/>
<dbReference type="Proteomes" id="UP000002168">
    <property type="component" value="Chromosome"/>
</dbReference>
<dbReference type="GO" id="GO:0005737">
    <property type="term" value="C:cytoplasm"/>
    <property type="evidence" value="ECO:0007669"/>
    <property type="project" value="UniProtKB-SubCell"/>
</dbReference>
<dbReference type="GO" id="GO:0044183">
    <property type="term" value="F:protein folding chaperone"/>
    <property type="evidence" value="ECO:0007669"/>
    <property type="project" value="TreeGrafter"/>
</dbReference>
<dbReference type="GO" id="GO:0051082">
    <property type="term" value="F:unfolded protein binding"/>
    <property type="evidence" value="ECO:0007669"/>
    <property type="project" value="UniProtKB-UniRule"/>
</dbReference>
<dbReference type="GO" id="GO:0042026">
    <property type="term" value="P:protein refolding"/>
    <property type="evidence" value="ECO:0007669"/>
    <property type="project" value="TreeGrafter"/>
</dbReference>
<dbReference type="CDD" id="cd00498">
    <property type="entry name" value="Hsp33"/>
    <property type="match status" value="1"/>
</dbReference>
<dbReference type="Gene3D" id="1.10.287.480">
    <property type="entry name" value="helix hairpin bin"/>
    <property type="match status" value="1"/>
</dbReference>
<dbReference type="Gene3D" id="3.55.30.10">
    <property type="entry name" value="Hsp33 domain"/>
    <property type="match status" value="1"/>
</dbReference>
<dbReference type="Gene3D" id="3.90.1280.10">
    <property type="entry name" value="HSP33 redox switch-like"/>
    <property type="match status" value="1"/>
</dbReference>
<dbReference type="HAMAP" id="MF_00117">
    <property type="entry name" value="HslO"/>
    <property type="match status" value="1"/>
</dbReference>
<dbReference type="InterPro" id="IPR000397">
    <property type="entry name" value="Heat_shock_Hsp33"/>
</dbReference>
<dbReference type="InterPro" id="IPR016154">
    <property type="entry name" value="Heat_shock_Hsp33_C"/>
</dbReference>
<dbReference type="InterPro" id="IPR016153">
    <property type="entry name" value="Heat_shock_Hsp33_N"/>
</dbReference>
<dbReference type="InterPro" id="IPR023212">
    <property type="entry name" value="Hsp33_helix_hairpin_bin_dom_sf"/>
</dbReference>
<dbReference type="NCBIfam" id="NF001033">
    <property type="entry name" value="PRK00114.1"/>
    <property type="match status" value="1"/>
</dbReference>
<dbReference type="PANTHER" id="PTHR30111">
    <property type="entry name" value="33 KDA CHAPERONIN"/>
    <property type="match status" value="1"/>
</dbReference>
<dbReference type="PANTHER" id="PTHR30111:SF1">
    <property type="entry name" value="33 KDA CHAPERONIN"/>
    <property type="match status" value="1"/>
</dbReference>
<dbReference type="Pfam" id="PF01430">
    <property type="entry name" value="HSP33"/>
    <property type="match status" value="1"/>
</dbReference>
<dbReference type="PIRSF" id="PIRSF005261">
    <property type="entry name" value="Heat_shock_Hsp33"/>
    <property type="match status" value="1"/>
</dbReference>
<dbReference type="SUPFAM" id="SSF64397">
    <property type="entry name" value="Hsp33 domain"/>
    <property type="match status" value="1"/>
</dbReference>
<dbReference type="SUPFAM" id="SSF118352">
    <property type="entry name" value="HSP33 redox switch-like"/>
    <property type="match status" value="1"/>
</dbReference>
<sequence length="286" mass="31601">MSKDNLHRYLFENADVRGELVQLEQSYQEVLSAHNYPAPIQNLLGQLLAATSLLTATLKFNGDISVQLQGDGPVSLAVINGNNLQQLRGVARFKGELSSDGDLQQLFGKGHMVITLTPTEGERYQGVVALDKPTLAGCLEEYFAQSEQLPTSITLFANGKQAAGMLLQVLPTEGDHNAEFEHLEQLTATVKAEELFELEAEEVLHRLYHQEEVRLFEPVAVTFSCTCSRERSASAIRTVSREEIESILAEQGKIEMGCEYCNTNYSFDSIDVAAIFSNTQAPETKQ</sequence>
<accession>B1KN30</accession>
<proteinExistence type="inferred from homology"/>